<name>NQOR_ECOLU</name>
<protein>
    <recommendedName>
        <fullName evidence="1">NAD(P)H dehydrogenase (quinone)</fullName>
        <ecNumber evidence="1">1.6.5.2</ecNumber>
    </recommendedName>
    <alternativeName>
        <fullName>Flavoprotein WrbA</fullName>
    </alternativeName>
    <alternativeName>
        <fullName evidence="1">NAD(P)H:quinone oxidoreductase</fullName>
        <shortName evidence="1">NQO</shortName>
    </alternativeName>
</protein>
<sequence>MAKVLVLYYSMYGHIETMARAVAEGASKVDGAEVVVKRVPETMPPQLFEKAGGKTQTAPVATPQELADYDAIIFGTPTRFGNMSGQMRTFLDQTGGLWASGALYGKLASVFSSTGTGGGQEQTITSTWTTLAHHGMVIVPIGYAAQELFDVSQVRGGTPYGATTIAGGDGSRQPSQEELSIARYQGEYVAGLAVKLNG</sequence>
<feature type="chain" id="PRO_1000200626" description="NAD(P)H dehydrogenase (quinone)">
    <location>
        <begin position="1"/>
        <end position="198"/>
    </location>
</feature>
<feature type="domain" description="Flavodoxin-like" evidence="1">
    <location>
        <begin position="4"/>
        <end position="189"/>
    </location>
</feature>
<feature type="binding site" evidence="1">
    <location>
        <begin position="10"/>
        <end position="15"/>
    </location>
    <ligand>
        <name>FMN</name>
        <dbReference type="ChEBI" id="CHEBI:58210"/>
    </ligand>
</feature>
<feature type="binding site" evidence="1">
    <location>
        <position position="12"/>
    </location>
    <ligand>
        <name>NAD(+)</name>
        <dbReference type="ChEBI" id="CHEBI:57540"/>
    </ligand>
</feature>
<feature type="binding site" evidence="1">
    <location>
        <begin position="78"/>
        <end position="80"/>
    </location>
    <ligand>
        <name>FMN</name>
        <dbReference type="ChEBI" id="CHEBI:58210"/>
    </ligand>
</feature>
<feature type="binding site" evidence="1">
    <location>
        <position position="98"/>
    </location>
    <ligand>
        <name>substrate</name>
    </ligand>
</feature>
<feature type="binding site" evidence="1">
    <location>
        <begin position="113"/>
        <end position="118"/>
    </location>
    <ligand>
        <name>FMN</name>
        <dbReference type="ChEBI" id="CHEBI:58210"/>
    </ligand>
</feature>
<feature type="binding site" evidence="1">
    <location>
        <position position="133"/>
    </location>
    <ligand>
        <name>FMN</name>
        <dbReference type="ChEBI" id="CHEBI:58210"/>
    </ligand>
</feature>
<accession>B7N3F9</accession>
<gene>
    <name type="ordered locus">ECUMN_1186</name>
</gene>
<dbReference type="EC" id="1.6.5.2" evidence="1"/>
<dbReference type="EMBL" id="CU928163">
    <property type="protein sequence ID" value="CAR12395.1"/>
    <property type="molecule type" value="Genomic_DNA"/>
</dbReference>
<dbReference type="RefSeq" id="YP_002411939.1">
    <property type="nucleotide sequence ID" value="NC_011751.1"/>
</dbReference>
<dbReference type="SMR" id="B7N3F9"/>
<dbReference type="STRING" id="585056.ECUMN_1186"/>
<dbReference type="KEGG" id="eum:ECUMN_1186"/>
<dbReference type="PATRIC" id="fig|585056.7.peg.1383"/>
<dbReference type="HOGENOM" id="CLU_051402_0_2_6"/>
<dbReference type="Proteomes" id="UP000007097">
    <property type="component" value="Chromosome"/>
</dbReference>
<dbReference type="GO" id="GO:0016020">
    <property type="term" value="C:membrane"/>
    <property type="evidence" value="ECO:0007669"/>
    <property type="project" value="TreeGrafter"/>
</dbReference>
<dbReference type="GO" id="GO:0050660">
    <property type="term" value="F:flavin adenine dinucleotide binding"/>
    <property type="evidence" value="ECO:0007669"/>
    <property type="project" value="UniProtKB-UniRule"/>
</dbReference>
<dbReference type="GO" id="GO:0010181">
    <property type="term" value="F:FMN binding"/>
    <property type="evidence" value="ECO:0007669"/>
    <property type="project" value="InterPro"/>
</dbReference>
<dbReference type="GO" id="GO:0051287">
    <property type="term" value="F:NAD binding"/>
    <property type="evidence" value="ECO:0007669"/>
    <property type="project" value="UniProtKB-UniRule"/>
</dbReference>
<dbReference type="GO" id="GO:0050136">
    <property type="term" value="F:NADH:ubiquinone reductase (non-electrogenic) activity"/>
    <property type="evidence" value="ECO:0007669"/>
    <property type="project" value="RHEA"/>
</dbReference>
<dbReference type="GO" id="GO:0050661">
    <property type="term" value="F:NADP binding"/>
    <property type="evidence" value="ECO:0007669"/>
    <property type="project" value="UniProtKB-UniRule"/>
</dbReference>
<dbReference type="GO" id="GO:0008753">
    <property type="term" value="F:NADPH dehydrogenase (quinone) activity"/>
    <property type="evidence" value="ECO:0007669"/>
    <property type="project" value="RHEA"/>
</dbReference>
<dbReference type="FunFam" id="3.40.50.360:FF:000004">
    <property type="entry name" value="NAD(P)H dehydrogenase (quinone)"/>
    <property type="match status" value="1"/>
</dbReference>
<dbReference type="Gene3D" id="3.40.50.360">
    <property type="match status" value="1"/>
</dbReference>
<dbReference type="HAMAP" id="MF_01017">
    <property type="entry name" value="NQOR"/>
    <property type="match status" value="1"/>
</dbReference>
<dbReference type="InterPro" id="IPR008254">
    <property type="entry name" value="Flavodoxin/NO_synth"/>
</dbReference>
<dbReference type="InterPro" id="IPR029039">
    <property type="entry name" value="Flavoprotein-like_sf"/>
</dbReference>
<dbReference type="InterPro" id="IPR010089">
    <property type="entry name" value="Flavoprotein_WrbA-like"/>
</dbReference>
<dbReference type="InterPro" id="IPR005025">
    <property type="entry name" value="FMN_Rdtase-like_dom"/>
</dbReference>
<dbReference type="InterPro" id="IPR037513">
    <property type="entry name" value="NQO"/>
</dbReference>
<dbReference type="NCBIfam" id="TIGR01755">
    <property type="entry name" value="flav_wrbA"/>
    <property type="match status" value="1"/>
</dbReference>
<dbReference type="NCBIfam" id="NF002999">
    <property type="entry name" value="PRK03767.1"/>
    <property type="match status" value="1"/>
</dbReference>
<dbReference type="PANTHER" id="PTHR30546">
    <property type="entry name" value="FLAVODOXIN-RELATED PROTEIN WRBA-RELATED"/>
    <property type="match status" value="1"/>
</dbReference>
<dbReference type="PANTHER" id="PTHR30546:SF23">
    <property type="entry name" value="FLAVOPROTEIN-LIKE PROTEIN YCP4-RELATED"/>
    <property type="match status" value="1"/>
</dbReference>
<dbReference type="Pfam" id="PF03358">
    <property type="entry name" value="FMN_red"/>
    <property type="match status" value="1"/>
</dbReference>
<dbReference type="SUPFAM" id="SSF52218">
    <property type="entry name" value="Flavoproteins"/>
    <property type="match status" value="1"/>
</dbReference>
<dbReference type="PROSITE" id="PS50902">
    <property type="entry name" value="FLAVODOXIN_LIKE"/>
    <property type="match status" value="1"/>
</dbReference>
<evidence type="ECO:0000255" key="1">
    <source>
        <dbReference type="HAMAP-Rule" id="MF_01017"/>
    </source>
</evidence>
<comment type="catalytic activity">
    <reaction evidence="1">
        <text>a quinone + NADH + H(+) = a quinol + NAD(+)</text>
        <dbReference type="Rhea" id="RHEA:46160"/>
        <dbReference type="ChEBI" id="CHEBI:15378"/>
        <dbReference type="ChEBI" id="CHEBI:24646"/>
        <dbReference type="ChEBI" id="CHEBI:57540"/>
        <dbReference type="ChEBI" id="CHEBI:57945"/>
        <dbReference type="ChEBI" id="CHEBI:132124"/>
        <dbReference type="EC" id="1.6.5.2"/>
    </reaction>
</comment>
<comment type="catalytic activity">
    <reaction evidence="1">
        <text>a quinone + NADPH + H(+) = a quinol + NADP(+)</text>
        <dbReference type="Rhea" id="RHEA:46164"/>
        <dbReference type="ChEBI" id="CHEBI:15378"/>
        <dbReference type="ChEBI" id="CHEBI:24646"/>
        <dbReference type="ChEBI" id="CHEBI:57783"/>
        <dbReference type="ChEBI" id="CHEBI:58349"/>
        <dbReference type="ChEBI" id="CHEBI:132124"/>
        <dbReference type="EC" id="1.6.5.2"/>
    </reaction>
</comment>
<comment type="cofactor">
    <cofactor evidence="1">
        <name>FMN</name>
        <dbReference type="ChEBI" id="CHEBI:58210"/>
    </cofactor>
    <text evidence="1">Binds 1 FMN per monomer.</text>
</comment>
<comment type="similarity">
    <text evidence="1">Belongs to the WrbA family.</text>
</comment>
<proteinExistence type="inferred from homology"/>
<organism>
    <name type="scientific">Escherichia coli O17:K52:H18 (strain UMN026 / ExPEC)</name>
    <dbReference type="NCBI Taxonomy" id="585056"/>
    <lineage>
        <taxon>Bacteria</taxon>
        <taxon>Pseudomonadati</taxon>
        <taxon>Pseudomonadota</taxon>
        <taxon>Gammaproteobacteria</taxon>
        <taxon>Enterobacterales</taxon>
        <taxon>Enterobacteriaceae</taxon>
        <taxon>Escherichia</taxon>
    </lineage>
</organism>
<reference key="1">
    <citation type="journal article" date="2009" name="PLoS Genet.">
        <title>Organised genome dynamics in the Escherichia coli species results in highly diverse adaptive paths.</title>
        <authorList>
            <person name="Touchon M."/>
            <person name="Hoede C."/>
            <person name="Tenaillon O."/>
            <person name="Barbe V."/>
            <person name="Baeriswyl S."/>
            <person name="Bidet P."/>
            <person name="Bingen E."/>
            <person name="Bonacorsi S."/>
            <person name="Bouchier C."/>
            <person name="Bouvet O."/>
            <person name="Calteau A."/>
            <person name="Chiapello H."/>
            <person name="Clermont O."/>
            <person name="Cruveiller S."/>
            <person name="Danchin A."/>
            <person name="Diard M."/>
            <person name="Dossat C."/>
            <person name="Karoui M.E."/>
            <person name="Frapy E."/>
            <person name="Garry L."/>
            <person name="Ghigo J.M."/>
            <person name="Gilles A.M."/>
            <person name="Johnson J."/>
            <person name="Le Bouguenec C."/>
            <person name="Lescat M."/>
            <person name="Mangenot S."/>
            <person name="Martinez-Jehanne V."/>
            <person name="Matic I."/>
            <person name="Nassif X."/>
            <person name="Oztas S."/>
            <person name="Petit M.A."/>
            <person name="Pichon C."/>
            <person name="Rouy Z."/>
            <person name="Ruf C.S."/>
            <person name="Schneider D."/>
            <person name="Tourret J."/>
            <person name="Vacherie B."/>
            <person name="Vallenet D."/>
            <person name="Medigue C."/>
            <person name="Rocha E.P.C."/>
            <person name="Denamur E."/>
        </authorList>
    </citation>
    <scope>NUCLEOTIDE SEQUENCE [LARGE SCALE GENOMIC DNA]</scope>
    <source>
        <strain>UMN026 / ExPEC</strain>
    </source>
</reference>
<keyword id="KW-0285">Flavoprotein</keyword>
<keyword id="KW-0288">FMN</keyword>
<keyword id="KW-0520">NAD</keyword>
<keyword id="KW-0521">NADP</keyword>
<keyword id="KW-0547">Nucleotide-binding</keyword>
<keyword id="KW-0560">Oxidoreductase</keyword>